<reference key="1">
    <citation type="journal article" date="2018" name="Angew. Chem. Int. Ed.">
        <title>Genome mining and comparative biosynthesis of meroterpenoids from two phylogenetically distinct fungi.</title>
        <authorList>
            <person name="Zhang X."/>
            <person name="Wang T.T."/>
            <person name="Xu Q.L."/>
            <person name="Xiong Y."/>
            <person name="Zhang L."/>
            <person name="Han H."/>
            <person name="Xu K."/>
            <person name="Guo W.J."/>
            <person name="Xu Q."/>
            <person name="Tan R.X."/>
            <person name="Ge H.M."/>
        </authorList>
    </citation>
    <scope>NUCLEOTIDE SEQUENCE [MRNA]</scope>
    <scope>FUNCTION</scope>
    <scope>PATHWAY</scope>
    <source>
        <strain>Z14-w</strain>
    </source>
</reference>
<evidence type="ECO:0000250" key="1">
    <source>
        <dbReference type="UniProtKB" id="P04798"/>
    </source>
</evidence>
<evidence type="ECO:0000255" key="2"/>
<evidence type="ECO:0000269" key="3">
    <source>
    </source>
</evidence>
<evidence type="ECO:0000303" key="4">
    <source>
    </source>
</evidence>
<evidence type="ECO:0000305" key="5"/>
<evidence type="ECO:0000305" key="6">
    <source>
    </source>
</evidence>
<proteinExistence type="evidence at transcript level"/>
<organism>
    <name type="scientific">Nectria sp</name>
    <dbReference type="NCBI Taxonomy" id="1755444"/>
    <lineage>
        <taxon>Eukaryota</taxon>
        <taxon>Fungi</taxon>
        <taxon>Dikarya</taxon>
        <taxon>Ascomycota</taxon>
        <taxon>Pezizomycotina</taxon>
        <taxon>Sordariomycetes</taxon>
        <taxon>Hypocreomycetidae</taxon>
        <taxon>Hypocreales</taxon>
        <taxon>Nectriaceae</taxon>
        <taxon>Nectria</taxon>
    </lineage>
</organism>
<feature type="chain" id="PRO_0000452573" description="Cytochrome P450 monooxygenase ntnM">
    <location>
        <begin position="1"/>
        <end position="516"/>
    </location>
</feature>
<feature type="transmembrane region" description="Helical" evidence="2">
    <location>
        <begin position="22"/>
        <end position="42"/>
    </location>
</feature>
<feature type="binding site" description="axial binding residue" evidence="1">
    <location>
        <position position="453"/>
    </location>
    <ligand>
        <name>heme</name>
        <dbReference type="ChEBI" id="CHEBI:30413"/>
    </ligand>
    <ligandPart>
        <name>Fe</name>
        <dbReference type="ChEBI" id="CHEBI:18248"/>
    </ligandPart>
</feature>
<protein>
    <recommendedName>
        <fullName evidence="4">Cytochrome P450 monooxygenase ntnM</fullName>
        <ecNumber evidence="6">1.-.-.-</ecNumber>
    </recommendedName>
    <alternativeName>
        <fullName evidence="4">Nectripenoid biosynthesis cluster protein M</fullName>
    </alternativeName>
</protein>
<sequence length="516" mass="58770">MFGDFVEKLPQKLPQKLDIPLIINVILSIAAIALIRALAISILRQYRLRKLPLVNGVGVFESSQKAKQNFLFNAEGLLENGFTKSTKAFRMATDDSEVLILSPDYIDEIRNDKRLSLTHALAEDFLGHIPAFVNFSPQKGLNDMAGDILQKKLTQSLDLSTEAALALQEQWTDNKEWHALNAKTTMVEIVARISSRVFLGLELCRNPAWLRITADYTVNVFFGVMALKKWPKYLHPFVWRFVPEVRTVRDQIQEAVNLIQPVVEKRTAEGKSPSSRKTYSDTIQWANELANGRPYDPALLQLGFSLAAIHTTSDLLSQILYNICAYPEYIDPLREEIVTVLKEHGMTKAGLFKMKLMDSIMKESQRLKPGAMLMMRRMVLEDITLSNGVFLPRGVQIGIPTRSHFDPSFYTDPERFDGYRYVKMDDDPQREKSRHFVSTSPEHLAFGHGKHACPGRFFASQEIKIALCHILMKYEFKLADGSKPTVMKMGWVLSSDPMVQLMVRKREGVDENLLYK</sequence>
<keyword id="KW-0349">Heme</keyword>
<keyword id="KW-0408">Iron</keyword>
<keyword id="KW-0472">Membrane</keyword>
<keyword id="KW-0479">Metal-binding</keyword>
<keyword id="KW-0503">Monooxygenase</keyword>
<keyword id="KW-0560">Oxidoreductase</keyword>
<keyword id="KW-0812">Transmembrane</keyword>
<keyword id="KW-1133">Transmembrane helix</keyword>
<comment type="function">
    <text evidence="3 6">Cytochrome P450 monooxygenase; part of the gene cluster that mediates the biosynthesis of the meroterpenoids nectripenoids A and B, as well as cochliquninone D and isocochliquninone E (PubMed:29797385). The pathway probably begins with the HR-PKS ntnH that catalyzes two chain-extension steps to form a reduced triketide, which then primes the SAT domain in the NR-PKS ntnG to initiate three more cycles of extension to give a linear hexaketide corresponding to the polyketide part of nectripenoids (Probable). The FAD-dependent monooxygenase ntnJ then performs an oxidative decarboxylation at C11 of the ntnH/ntnG product, via an electrophilic aromatic hydroxylation with concomitant ipso-decarboxylation (Probable). The membrane-bound polyprenyl transferase ntnF then introduces a farnesyl group before the FAD-dependent monooxygenase ntnK functions as the first epoxidase on terminal C12'-C13' olefin, followed by a second epoxidation on C7'-C8' catalyzed by ntnA (Probable). The terpene cyclase/mutase ntnI then initiates the sequential tricyclic ring formation through protonation of the terminal epoxide and catalyzes the regioselective and stereoselective 6/6/6-tricyclic ring formation (Probable). The cytochrome P450 monooxygenase ntnM may then hydroxylate C1' (Probable).</text>
</comment>
<comment type="cofactor">
    <cofactor evidence="1">
        <name>heme</name>
        <dbReference type="ChEBI" id="CHEBI:30413"/>
    </cofactor>
</comment>
<comment type="pathway">
    <text evidence="6">Secondary metabolite biosynthesis; terpenoid biosynthesis.</text>
</comment>
<comment type="subcellular location">
    <subcellularLocation>
        <location evidence="2">Membrane</location>
        <topology evidence="2">Single-pass membrane protein</topology>
    </subcellularLocation>
</comment>
<comment type="similarity">
    <text evidence="5">Belongs to the cytochrome P450 family.</text>
</comment>
<accession>A0A455LLV8</accession>
<gene>
    <name evidence="4" type="primary">ntnM</name>
</gene>
<name>NTNM_NECSZ</name>
<dbReference type="EC" id="1.-.-.-" evidence="6"/>
<dbReference type="EMBL" id="MH183006">
    <property type="protein sequence ID" value="AYO60873.1"/>
    <property type="molecule type" value="mRNA"/>
</dbReference>
<dbReference type="SMR" id="A0A455LLV8"/>
<dbReference type="UniPathway" id="UPA00213"/>
<dbReference type="GO" id="GO:0016020">
    <property type="term" value="C:membrane"/>
    <property type="evidence" value="ECO:0007669"/>
    <property type="project" value="UniProtKB-SubCell"/>
</dbReference>
<dbReference type="GO" id="GO:0020037">
    <property type="term" value="F:heme binding"/>
    <property type="evidence" value="ECO:0007669"/>
    <property type="project" value="InterPro"/>
</dbReference>
<dbReference type="GO" id="GO:0005506">
    <property type="term" value="F:iron ion binding"/>
    <property type="evidence" value="ECO:0007669"/>
    <property type="project" value="InterPro"/>
</dbReference>
<dbReference type="GO" id="GO:0004497">
    <property type="term" value="F:monooxygenase activity"/>
    <property type="evidence" value="ECO:0007669"/>
    <property type="project" value="UniProtKB-KW"/>
</dbReference>
<dbReference type="GO" id="GO:0016705">
    <property type="term" value="F:oxidoreductase activity, acting on paired donors, with incorporation or reduction of molecular oxygen"/>
    <property type="evidence" value="ECO:0007669"/>
    <property type="project" value="InterPro"/>
</dbReference>
<dbReference type="GO" id="GO:0019748">
    <property type="term" value="P:secondary metabolic process"/>
    <property type="evidence" value="ECO:0007669"/>
    <property type="project" value="UniProtKB-ARBA"/>
</dbReference>
<dbReference type="GO" id="GO:0016114">
    <property type="term" value="P:terpenoid biosynthetic process"/>
    <property type="evidence" value="ECO:0007669"/>
    <property type="project" value="UniProtKB-UniPathway"/>
</dbReference>
<dbReference type="CDD" id="cd11041">
    <property type="entry name" value="CYP503A1-like"/>
    <property type="match status" value="1"/>
</dbReference>
<dbReference type="Gene3D" id="1.10.630.10">
    <property type="entry name" value="Cytochrome P450"/>
    <property type="match status" value="1"/>
</dbReference>
<dbReference type="InterPro" id="IPR001128">
    <property type="entry name" value="Cyt_P450"/>
</dbReference>
<dbReference type="InterPro" id="IPR017972">
    <property type="entry name" value="Cyt_P450_CS"/>
</dbReference>
<dbReference type="InterPro" id="IPR002403">
    <property type="entry name" value="Cyt_P450_E_grp-IV"/>
</dbReference>
<dbReference type="InterPro" id="IPR036396">
    <property type="entry name" value="Cyt_P450_sf"/>
</dbReference>
<dbReference type="PANTHER" id="PTHR46206">
    <property type="entry name" value="CYTOCHROME P450"/>
    <property type="match status" value="1"/>
</dbReference>
<dbReference type="PANTHER" id="PTHR46206:SF2">
    <property type="entry name" value="CYTOCHROME P450 MONOOXYGENASE AUSG-RELATED"/>
    <property type="match status" value="1"/>
</dbReference>
<dbReference type="Pfam" id="PF00067">
    <property type="entry name" value="p450"/>
    <property type="match status" value="1"/>
</dbReference>
<dbReference type="PRINTS" id="PR00465">
    <property type="entry name" value="EP450IV"/>
</dbReference>
<dbReference type="SUPFAM" id="SSF48264">
    <property type="entry name" value="Cytochrome P450"/>
    <property type="match status" value="1"/>
</dbReference>
<dbReference type="PROSITE" id="PS00086">
    <property type="entry name" value="CYTOCHROME_P450"/>
    <property type="match status" value="1"/>
</dbReference>